<accession>Q54QR3</accession>
<accession>Q9XYN6</accession>
<keyword id="KW-0342">GTP-binding</keyword>
<keyword id="KW-0449">Lipoprotein</keyword>
<keyword id="KW-0547">Nucleotide-binding</keyword>
<keyword id="KW-0636">Prenylation</keyword>
<keyword id="KW-1185">Reference proteome</keyword>
<gene>
    <name type="primary">rab32A</name>
    <name type="synonym">rabE</name>
    <name type="ORF">DDB_G0283603</name>
</gene>
<name>RB32A_DICDI</name>
<reference key="1">
    <citation type="journal article" date="1999" name="DNA Cell Biol.">
        <title>Molecular characterization of rabE, a developmentally regulated Dictyostelium homolog of mammalian rab GTPases.</title>
        <authorList>
            <person name="Norian L."/>
            <person name="Dragoi I.A."/>
            <person name="O'Halloran T."/>
        </authorList>
    </citation>
    <scope>NUCLEOTIDE SEQUENCE [GENOMIC DNA]</scope>
    <scope>DEVELOPMENTAL STAGE</scope>
</reference>
<reference key="2">
    <citation type="journal article" date="2005" name="Nature">
        <title>The genome of the social amoeba Dictyostelium discoideum.</title>
        <authorList>
            <person name="Eichinger L."/>
            <person name="Pachebat J.A."/>
            <person name="Gloeckner G."/>
            <person name="Rajandream M.A."/>
            <person name="Sucgang R."/>
            <person name="Berriman M."/>
            <person name="Song J."/>
            <person name="Olsen R."/>
            <person name="Szafranski K."/>
            <person name="Xu Q."/>
            <person name="Tunggal B."/>
            <person name="Kummerfeld S."/>
            <person name="Madera M."/>
            <person name="Konfortov B.A."/>
            <person name="Rivero F."/>
            <person name="Bankier A.T."/>
            <person name="Lehmann R."/>
            <person name="Hamlin N."/>
            <person name="Davies R."/>
            <person name="Gaudet P."/>
            <person name="Fey P."/>
            <person name="Pilcher K."/>
            <person name="Chen G."/>
            <person name="Saunders D."/>
            <person name="Sodergren E.J."/>
            <person name="Davis P."/>
            <person name="Kerhornou A."/>
            <person name="Nie X."/>
            <person name="Hall N."/>
            <person name="Anjard C."/>
            <person name="Hemphill L."/>
            <person name="Bason N."/>
            <person name="Farbrother P."/>
            <person name="Desany B."/>
            <person name="Just E."/>
            <person name="Morio T."/>
            <person name="Rost R."/>
            <person name="Churcher C.M."/>
            <person name="Cooper J."/>
            <person name="Haydock S."/>
            <person name="van Driessche N."/>
            <person name="Cronin A."/>
            <person name="Goodhead I."/>
            <person name="Muzny D.M."/>
            <person name="Mourier T."/>
            <person name="Pain A."/>
            <person name="Lu M."/>
            <person name="Harper D."/>
            <person name="Lindsay R."/>
            <person name="Hauser H."/>
            <person name="James K.D."/>
            <person name="Quiles M."/>
            <person name="Madan Babu M."/>
            <person name="Saito T."/>
            <person name="Buchrieser C."/>
            <person name="Wardroper A."/>
            <person name="Felder M."/>
            <person name="Thangavelu M."/>
            <person name="Johnson D."/>
            <person name="Knights A."/>
            <person name="Loulseged H."/>
            <person name="Mungall K.L."/>
            <person name="Oliver K."/>
            <person name="Price C."/>
            <person name="Quail M.A."/>
            <person name="Urushihara H."/>
            <person name="Hernandez J."/>
            <person name="Rabbinowitsch E."/>
            <person name="Steffen D."/>
            <person name="Sanders M."/>
            <person name="Ma J."/>
            <person name="Kohara Y."/>
            <person name="Sharp S."/>
            <person name="Simmonds M.N."/>
            <person name="Spiegler S."/>
            <person name="Tivey A."/>
            <person name="Sugano S."/>
            <person name="White B."/>
            <person name="Walker D."/>
            <person name="Woodward J.R."/>
            <person name="Winckler T."/>
            <person name="Tanaka Y."/>
            <person name="Shaulsky G."/>
            <person name="Schleicher M."/>
            <person name="Weinstock G.M."/>
            <person name="Rosenthal A."/>
            <person name="Cox E.C."/>
            <person name="Chisholm R.L."/>
            <person name="Gibbs R.A."/>
            <person name="Loomis W.F."/>
            <person name="Platzer M."/>
            <person name="Kay R.R."/>
            <person name="Williams J.G."/>
            <person name="Dear P.H."/>
            <person name="Noegel A.A."/>
            <person name="Barrell B.G."/>
            <person name="Kuspa A."/>
        </authorList>
    </citation>
    <scope>NUCLEOTIDE SEQUENCE [LARGE SCALE GENOMIC DNA]</scope>
    <source>
        <strain>AX4</strain>
    </source>
</reference>
<reference key="3">
    <citation type="journal article" date="2006" name="Mol. Cell. Proteomics">
        <title>Proteomics fingerprinting of phagosome maturation and evidence for the role of a Galpha during uptake.</title>
        <authorList>
            <person name="Gotthardt D."/>
            <person name="Blancheteau V."/>
            <person name="Bosserhoff A."/>
            <person name="Ruppert T."/>
            <person name="Delorenzi M."/>
            <person name="Soldati T."/>
        </authorList>
    </citation>
    <scope>IDENTIFICATION BY MASS SPECTROMETRY [LARGE SCALE ANALYSIS]</scope>
    <source>
        <strain>AX2</strain>
    </source>
</reference>
<protein>
    <recommendedName>
        <fullName>Ras-related protein Rab-32A</fullName>
    </recommendedName>
</protein>
<proteinExistence type="evidence at protein level"/>
<comment type="developmental stage">
    <text evidence="3">Expression under developmental regulation, the mRNA starts to be expressed after 8 hours of development.</text>
</comment>
<comment type="similarity">
    <text evidence="4">Belongs to the small GTPase superfamily. Rab family.</text>
</comment>
<sequence>MSNNPADDEGYNEYLYKILVVGDIGTGKTSIIKRFVHNIFSMHYKSTIGVDFALKVINWDPKTEVRLQLWDIAGQERFGSMTRVYYKEAVGAMITFDVTRMSTFEAVAKWKADIDSKVTYGADEKPIPVVLLANKCDLGKDAFIKTANDMDKYCKDNGFIGWFETSAKENMNIEKAARFLVDHILKNDVRRNQPIEGTIQPGDLNKQPQPTSTGPSCCK</sequence>
<organism>
    <name type="scientific">Dictyostelium discoideum</name>
    <name type="common">Social amoeba</name>
    <dbReference type="NCBI Taxonomy" id="44689"/>
    <lineage>
        <taxon>Eukaryota</taxon>
        <taxon>Amoebozoa</taxon>
        <taxon>Evosea</taxon>
        <taxon>Eumycetozoa</taxon>
        <taxon>Dictyostelia</taxon>
        <taxon>Dictyosteliales</taxon>
        <taxon>Dictyosteliaceae</taxon>
        <taxon>Dictyostelium</taxon>
    </lineage>
</organism>
<feature type="chain" id="PRO_0000330641" description="Ras-related protein Rab-32A">
    <location>
        <begin position="1"/>
        <end position="219"/>
    </location>
</feature>
<feature type="region of interest" description="Disordered" evidence="2">
    <location>
        <begin position="192"/>
        <end position="219"/>
    </location>
</feature>
<feature type="short sequence motif" description="Effector region" evidence="1">
    <location>
        <begin position="44"/>
        <end position="52"/>
    </location>
</feature>
<feature type="compositionally biased region" description="Polar residues" evidence="2">
    <location>
        <begin position="206"/>
        <end position="219"/>
    </location>
</feature>
<feature type="binding site" evidence="1">
    <location>
        <begin position="22"/>
        <end position="29"/>
    </location>
    <ligand>
        <name>GTP</name>
        <dbReference type="ChEBI" id="CHEBI:37565"/>
    </ligand>
</feature>
<feature type="binding site" evidence="1">
    <location>
        <begin position="71"/>
        <end position="75"/>
    </location>
    <ligand>
        <name>GTP</name>
        <dbReference type="ChEBI" id="CHEBI:37565"/>
    </ligand>
</feature>
<feature type="binding site" evidence="1">
    <location>
        <begin position="134"/>
        <end position="137"/>
    </location>
    <ligand>
        <name>GTP</name>
        <dbReference type="ChEBI" id="CHEBI:37565"/>
    </ligand>
</feature>
<feature type="lipid moiety-binding region" description="S-geranylgeranyl cysteine" evidence="1">
    <location>
        <position position="217"/>
    </location>
</feature>
<feature type="lipid moiety-binding region" description="S-geranylgeranyl cysteine" evidence="1">
    <location>
        <position position="218"/>
    </location>
</feature>
<feature type="sequence conflict" description="In Ref. 1; AAD23450." evidence="4" ref="1">
    <original>MSNNPADD</original>
    <variation>MTNKNKLLNYLCGGADA</variation>
    <location>
        <begin position="1"/>
        <end position="8"/>
    </location>
</feature>
<dbReference type="EMBL" id="AF116859">
    <property type="protein sequence ID" value="AAD23450.1"/>
    <property type="molecule type" value="Genomic_DNA"/>
</dbReference>
<dbReference type="EMBL" id="AAFI02000056">
    <property type="protein sequence ID" value="EAL65568.1"/>
    <property type="molecule type" value="Genomic_DNA"/>
</dbReference>
<dbReference type="RefSeq" id="XP_638960.1">
    <property type="nucleotide sequence ID" value="XM_633868.1"/>
</dbReference>
<dbReference type="SMR" id="Q54QR3"/>
<dbReference type="FunCoup" id="Q54QR3">
    <property type="interactions" value="13"/>
</dbReference>
<dbReference type="STRING" id="44689.Q54QR3"/>
<dbReference type="PaxDb" id="44689-DDB0201639"/>
<dbReference type="EnsemblProtists" id="EAL65568">
    <property type="protein sequence ID" value="EAL65568"/>
    <property type="gene ID" value="DDB_G0283603"/>
</dbReference>
<dbReference type="GeneID" id="8624206"/>
<dbReference type="KEGG" id="ddi:DDB_G0283603"/>
<dbReference type="dictyBase" id="DDB_G0283603">
    <property type="gene designation" value="rab32A"/>
</dbReference>
<dbReference type="VEuPathDB" id="AmoebaDB:DDB_G0283603"/>
<dbReference type="eggNOG" id="KOG4423">
    <property type="taxonomic scope" value="Eukaryota"/>
</dbReference>
<dbReference type="HOGENOM" id="CLU_041217_10_6_1"/>
<dbReference type="InParanoid" id="Q54QR3"/>
<dbReference type="OMA" id="MHYKSTI"/>
<dbReference type="PhylomeDB" id="Q54QR3"/>
<dbReference type="Reactome" id="R-DDI-8873719">
    <property type="pathway name" value="RAB geranylgeranylation"/>
</dbReference>
<dbReference type="PRO" id="PR:Q54QR3"/>
<dbReference type="Proteomes" id="UP000002195">
    <property type="component" value="Chromosome 4"/>
</dbReference>
<dbReference type="GO" id="GO:0012505">
    <property type="term" value="C:endomembrane system"/>
    <property type="evidence" value="ECO:0000318"/>
    <property type="project" value="GO_Central"/>
</dbReference>
<dbReference type="GO" id="GO:0005811">
    <property type="term" value="C:lipid droplet"/>
    <property type="evidence" value="ECO:0007005"/>
    <property type="project" value="dictyBase"/>
</dbReference>
<dbReference type="GO" id="GO:0005739">
    <property type="term" value="C:mitochondrion"/>
    <property type="evidence" value="ECO:0000318"/>
    <property type="project" value="GO_Central"/>
</dbReference>
<dbReference type="GO" id="GO:0140220">
    <property type="term" value="C:pathogen-containing vacuole"/>
    <property type="evidence" value="ECO:0007005"/>
    <property type="project" value="dictyBase"/>
</dbReference>
<dbReference type="GO" id="GO:0045335">
    <property type="term" value="C:phagocytic vesicle"/>
    <property type="evidence" value="ECO:0007005"/>
    <property type="project" value="dictyBase"/>
</dbReference>
<dbReference type="GO" id="GO:0005802">
    <property type="term" value="C:trans-Golgi network"/>
    <property type="evidence" value="ECO:0000318"/>
    <property type="project" value="GO_Central"/>
</dbReference>
<dbReference type="GO" id="GO:0005525">
    <property type="term" value="F:GTP binding"/>
    <property type="evidence" value="ECO:0007669"/>
    <property type="project" value="UniProtKB-KW"/>
</dbReference>
<dbReference type="GO" id="GO:0003924">
    <property type="term" value="F:GTPase activity"/>
    <property type="evidence" value="ECO:0000318"/>
    <property type="project" value="GO_Central"/>
</dbReference>
<dbReference type="GO" id="GO:0006971">
    <property type="term" value="P:hypotonic response"/>
    <property type="evidence" value="ECO:0007007"/>
    <property type="project" value="dictyBase"/>
</dbReference>
<dbReference type="GO" id="GO:0006886">
    <property type="term" value="P:intracellular protein transport"/>
    <property type="evidence" value="ECO:0000318"/>
    <property type="project" value="GO_Central"/>
</dbReference>
<dbReference type="GO" id="GO:0032438">
    <property type="term" value="P:melanosome organization"/>
    <property type="evidence" value="ECO:0000318"/>
    <property type="project" value="GO_Central"/>
</dbReference>
<dbReference type="GO" id="GO:0016192">
    <property type="term" value="P:vesicle-mediated transport"/>
    <property type="evidence" value="ECO:0007669"/>
    <property type="project" value="InterPro"/>
</dbReference>
<dbReference type="CDD" id="cd04107">
    <property type="entry name" value="Rab32_Rab38"/>
    <property type="match status" value="1"/>
</dbReference>
<dbReference type="FunFam" id="3.40.50.300:FF:000222">
    <property type="entry name" value="RAB32, member RAS oncogene family"/>
    <property type="match status" value="1"/>
</dbReference>
<dbReference type="Gene3D" id="3.40.50.300">
    <property type="entry name" value="P-loop containing nucleotide triphosphate hydrolases"/>
    <property type="match status" value="1"/>
</dbReference>
<dbReference type="InterPro" id="IPR027417">
    <property type="entry name" value="P-loop_NTPase"/>
</dbReference>
<dbReference type="InterPro" id="IPR030697">
    <property type="entry name" value="Rab29/Rab38/Rab32"/>
</dbReference>
<dbReference type="InterPro" id="IPR005225">
    <property type="entry name" value="Small_GTP-bd"/>
</dbReference>
<dbReference type="InterPro" id="IPR001806">
    <property type="entry name" value="Small_GTPase"/>
</dbReference>
<dbReference type="NCBIfam" id="TIGR00231">
    <property type="entry name" value="small_GTP"/>
    <property type="match status" value="1"/>
</dbReference>
<dbReference type="PANTHER" id="PTHR47981">
    <property type="entry name" value="RAB FAMILY"/>
    <property type="match status" value="1"/>
</dbReference>
<dbReference type="PANTHER" id="PTHR47981:SF39">
    <property type="entry name" value="RAS-RELATED PROTEIN RAB"/>
    <property type="match status" value="1"/>
</dbReference>
<dbReference type="Pfam" id="PF00071">
    <property type="entry name" value="Ras"/>
    <property type="match status" value="1"/>
</dbReference>
<dbReference type="PRINTS" id="PR00449">
    <property type="entry name" value="RASTRNSFRMNG"/>
</dbReference>
<dbReference type="SMART" id="SM00175">
    <property type="entry name" value="RAB"/>
    <property type="match status" value="1"/>
</dbReference>
<dbReference type="SMART" id="SM00176">
    <property type="entry name" value="RAN"/>
    <property type="match status" value="1"/>
</dbReference>
<dbReference type="SMART" id="SM00173">
    <property type="entry name" value="RAS"/>
    <property type="match status" value="1"/>
</dbReference>
<dbReference type="SMART" id="SM00174">
    <property type="entry name" value="RHO"/>
    <property type="match status" value="1"/>
</dbReference>
<dbReference type="SUPFAM" id="SSF52540">
    <property type="entry name" value="P-loop containing nucleoside triphosphate hydrolases"/>
    <property type="match status" value="1"/>
</dbReference>
<dbReference type="PROSITE" id="PS51419">
    <property type="entry name" value="RAB"/>
    <property type="match status" value="1"/>
</dbReference>
<evidence type="ECO:0000250" key="1"/>
<evidence type="ECO:0000256" key="2">
    <source>
        <dbReference type="SAM" id="MobiDB-lite"/>
    </source>
</evidence>
<evidence type="ECO:0000269" key="3">
    <source>
    </source>
</evidence>
<evidence type="ECO:0000305" key="4"/>